<gene>
    <name evidence="1" type="primary">aroA</name>
    <name type="ordered locus">Neut_0398</name>
</gene>
<accession>Q0AIZ5</accession>
<evidence type="ECO:0000255" key="1">
    <source>
        <dbReference type="HAMAP-Rule" id="MF_00210"/>
    </source>
</evidence>
<name>AROA_NITEC</name>
<feature type="chain" id="PRO_1000012454" description="3-phosphoshikimate 1-carboxyvinyltransferase">
    <location>
        <begin position="1"/>
        <end position="433"/>
    </location>
</feature>
<feature type="active site" description="Proton acceptor" evidence="1">
    <location>
        <position position="319"/>
    </location>
</feature>
<feature type="binding site" evidence="1">
    <location>
        <position position="22"/>
    </location>
    <ligand>
        <name>3-phosphoshikimate</name>
        <dbReference type="ChEBI" id="CHEBI:145989"/>
    </ligand>
</feature>
<feature type="binding site" evidence="1">
    <location>
        <position position="22"/>
    </location>
    <ligand>
        <name>phosphoenolpyruvate</name>
        <dbReference type="ChEBI" id="CHEBI:58702"/>
    </ligand>
</feature>
<feature type="binding site" evidence="1">
    <location>
        <position position="23"/>
    </location>
    <ligand>
        <name>3-phosphoshikimate</name>
        <dbReference type="ChEBI" id="CHEBI:145989"/>
    </ligand>
</feature>
<feature type="binding site" evidence="1">
    <location>
        <position position="27"/>
    </location>
    <ligand>
        <name>3-phosphoshikimate</name>
        <dbReference type="ChEBI" id="CHEBI:145989"/>
    </ligand>
</feature>
<feature type="binding site" evidence="1">
    <location>
        <position position="94"/>
    </location>
    <ligand>
        <name>phosphoenolpyruvate</name>
        <dbReference type="ChEBI" id="CHEBI:58702"/>
    </ligand>
</feature>
<feature type="binding site" evidence="1">
    <location>
        <position position="122"/>
    </location>
    <ligand>
        <name>phosphoenolpyruvate</name>
        <dbReference type="ChEBI" id="CHEBI:58702"/>
    </ligand>
</feature>
<feature type="binding site" evidence="1">
    <location>
        <position position="168"/>
    </location>
    <ligand>
        <name>3-phosphoshikimate</name>
        <dbReference type="ChEBI" id="CHEBI:145989"/>
    </ligand>
</feature>
<feature type="binding site" evidence="1">
    <location>
        <position position="169"/>
    </location>
    <ligand>
        <name>3-phosphoshikimate</name>
        <dbReference type="ChEBI" id="CHEBI:145989"/>
    </ligand>
</feature>
<feature type="binding site" evidence="1">
    <location>
        <position position="170"/>
    </location>
    <ligand>
        <name>3-phosphoshikimate</name>
        <dbReference type="ChEBI" id="CHEBI:145989"/>
    </ligand>
</feature>
<feature type="binding site" evidence="1">
    <location>
        <position position="170"/>
    </location>
    <ligand>
        <name>phosphoenolpyruvate</name>
        <dbReference type="ChEBI" id="CHEBI:58702"/>
    </ligand>
</feature>
<feature type="binding site" evidence="1">
    <location>
        <position position="196"/>
    </location>
    <ligand>
        <name>3-phosphoshikimate</name>
        <dbReference type="ChEBI" id="CHEBI:145989"/>
    </ligand>
</feature>
<feature type="binding site" evidence="1">
    <location>
        <position position="319"/>
    </location>
    <ligand>
        <name>3-phosphoshikimate</name>
        <dbReference type="ChEBI" id="CHEBI:145989"/>
    </ligand>
</feature>
<feature type="binding site" evidence="1">
    <location>
        <position position="346"/>
    </location>
    <ligand>
        <name>3-phosphoshikimate</name>
        <dbReference type="ChEBI" id="CHEBI:145989"/>
    </ligand>
</feature>
<feature type="binding site" evidence="1">
    <location>
        <position position="350"/>
    </location>
    <ligand>
        <name>phosphoenolpyruvate</name>
        <dbReference type="ChEBI" id="CHEBI:58702"/>
    </ligand>
</feature>
<feature type="binding site" evidence="1">
    <location>
        <position position="394"/>
    </location>
    <ligand>
        <name>phosphoenolpyruvate</name>
        <dbReference type="ChEBI" id="CHEBI:58702"/>
    </ligand>
</feature>
<feature type="binding site" evidence="1">
    <location>
        <position position="418"/>
    </location>
    <ligand>
        <name>phosphoenolpyruvate</name>
        <dbReference type="ChEBI" id="CHEBI:58702"/>
    </ligand>
</feature>
<comment type="function">
    <text evidence="1">Catalyzes the transfer of the enolpyruvyl moiety of phosphoenolpyruvate (PEP) to the 5-hydroxyl of shikimate-3-phosphate (S3P) to produce enolpyruvyl shikimate-3-phosphate and inorganic phosphate.</text>
</comment>
<comment type="catalytic activity">
    <reaction evidence="1">
        <text>3-phosphoshikimate + phosphoenolpyruvate = 5-O-(1-carboxyvinyl)-3-phosphoshikimate + phosphate</text>
        <dbReference type="Rhea" id="RHEA:21256"/>
        <dbReference type="ChEBI" id="CHEBI:43474"/>
        <dbReference type="ChEBI" id="CHEBI:57701"/>
        <dbReference type="ChEBI" id="CHEBI:58702"/>
        <dbReference type="ChEBI" id="CHEBI:145989"/>
        <dbReference type="EC" id="2.5.1.19"/>
    </reaction>
    <physiologicalReaction direction="left-to-right" evidence="1">
        <dbReference type="Rhea" id="RHEA:21257"/>
    </physiologicalReaction>
</comment>
<comment type="pathway">
    <text evidence="1">Metabolic intermediate biosynthesis; chorismate biosynthesis; chorismate from D-erythrose 4-phosphate and phosphoenolpyruvate: step 6/7.</text>
</comment>
<comment type="subunit">
    <text evidence="1">Monomer.</text>
</comment>
<comment type="subcellular location">
    <subcellularLocation>
        <location evidence="1">Cytoplasm</location>
    </subcellularLocation>
</comment>
<comment type="similarity">
    <text evidence="1">Belongs to the EPSP synthase family.</text>
</comment>
<protein>
    <recommendedName>
        <fullName evidence="1">3-phosphoshikimate 1-carboxyvinyltransferase</fullName>
        <ecNumber evidence="1">2.5.1.19</ecNumber>
    </recommendedName>
    <alternativeName>
        <fullName evidence="1">5-enolpyruvylshikimate-3-phosphate synthase</fullName>
        <shortName evidence="1">EPSP synthase</shortName>
        <shortName evidence="1">EPSPS</shortName>
    </alternativeName>
</protein>
<reference key="1">
    <citation type="journal article" date="2007" name="Environ. Microbiol.">
        <title>Whole-genome analysis of the ammonia-oxidizing bacterium, Nitrosomonas eutropha C91: implications for niche adaptation.</title>
        <authorList>
            <person name="Stein L.Y."/>
            <person name="Arp D.J."/>
            <person name="Berube P.M."/>
            <person name="Chain P.S."/>
            <person name="Hauser L."/>
            <person name="Jetten M.S."/>
            <person name="Klotz M.G."/>
            <person name="Larimer F.W."/>
            <person name="Norton J.M."/>
            <person name="Op den Camp H.J.M."/>
            <person name="Shin M."/>
            <person name="Wei X."/>
        </authorList>
    </citation>
    <scope>NUCLEOTIDE SEQUENCE [LARGE SCALE GENOMIC DNA]</scope>
    <source>
        <strain>DSM 101675 / C91 / Nm57</strain>
    </source>
</reference>
<organism>
    <name type="scientific">Nitrosomonas eutropha (strain DSM 101675 / C91 / Nm57)</name>
    <dbReference type="NCBI Taxonomy" id="335283"/>
    <lineage>
        <taxon>Bacteria</taxon>
        <taxon>Pseudomonadati</taxon>
        <taxon>Pseudomonadota</taxon>
        <taxon>Betaproteobacteria</taxon>
        <taxon>Nitrosomonadales</taxon>
        <taxon>Nitrosomonadaceae</taxon>
        <taxon>Nitrosomonas</taxon>
    </lineage>
</organism>
<sequence length="433" mass="46841">MEWLDLPLVRCAAGKVRLPGSKSISNRVLLLSALAEGTTTISNLLESDDTGRMLDALKMLGVAVTRTDEDQYLITGCSGRFSVKEADLFLGNAGTAFRPLTAVLSLMHGHYHLSGVPRMHERPIGDLVDALRQVGAVITYLEREHFPPLEIHPAAIHPADILINGNISSQFLSGLLMALPLAGEPATIIVNGTLISQPYVTLTIAQMAYFGVQVERESWLRFIVPGNQIYHSPGKIVVEGDASSASYFLAAGAIAGGPVRVDGVGRDSCQGDIRFVEALEAMGACIKMGSDWIESSAPGCRSDGKVLKAIDFDCNHIPDAAMTLATTALFAQGTTTLRNIASWRVKETDRITAMSTELRKLGAQVESGDDFLRITPPDDPLVANTVIDTYDDHRMAMCFSLISLGTPVRINDPHCVAKTFPDYFEKFTAITHQ</sequence>
<proteinExistence type="inferred from homology"/>
<dbReference type="EC" id="2.5.1.19" evidence="1"/>
<dbReference type="EMBL" id="CP000450">
    <property type="protein sequence ID" value="ABI58676.1"/>
    <property type="molecule type" value="Genomic_DNA"/>
</dbReference>
<dbReference type="RefSeq" id="WP_011633518.1">
    <property type="nucleotide sequence ID" value="NC_008344.1"/>
</dbReference>
<dbReference type="SMR" id="Q0AIZ5"/>
<dbReference type="STRING" id="335283.Neut_0398"/>
<dbReference type="KEGG" id="net:Neut_0398"/>
<dbReference type="eggNOG" id="COG0128">
    <property type="taxonomic scope" value="Bacteria"/>
</dbReference>
<dbReference type="HOGENOM" id="CLU_024321_0_0_4"/>
<dbReference type="OrthoDB" id="9809920at2"/>
<dbReference type="UniPathway" id="UPA00053">
    <property type="reaction ID" value="UER00089"/>
</dbReference>
<dbReference type="Proteomes" id="UP000001966">
    <property type="component" value="Chromosome"/>
</dbReference>
<dbReference type="GO" id="GO:0005737">
    <property type="term" value="C:cytoplasm"/>
    <property type="evidence" value="ECO:0007669"/>
    <property type="project" value="UniProtKB-SubCell"/>
</dbReference>
<dbReference type="GO" id="GO:0003866">
    <property type="term" value="F:3-phosphoshikimate 1-carboxyvinyltransferase activity"/>
    <property type="evidence" value="ECO:0007669"/>
    <property type="project" value="UniProtKB-UniRule"/>
</dbReference>
<dbReference type="GO" id="GO:0008652">
    <property type="term" value="P:amino acid biosynthetic process"/>
    <property type="evidence" value="ECO:0007669"/>
    <property type="project" value="UniProtKB-KW"/>
</dbReference>
<dbReference type="GO" id="GO:0009073">
    <property type="term" value="P:aromatic amino acid family biosynthetic process"/>
    <property type="evidence" value="ECO:0007669"/>
    <property type="project" value="UniProtKB-KW"/>
</dbReference>
<dbReference type="GO" id="GO:0009423">
    <property type="term" value="P:chorismate biosynthetic process"/>
    <property type="evidence" value="ECO:0007669"/>
    <property type="project" value="UniProtKB-UniRule"/>
</dbReference>
<dbReference type="CDD" id="cd01556">
    <property type="entry name" value="EPSP_synthase"/>
    <property type="match status" value="1"/>
</dbReference>
<dbReference type="FunFam" id="3.65.10.10:FF:000003">
    <property type="entry name" value="3-phosphoshikimate 1-carboxyvinyltransferase"/>
    <property type="match status" value="1"/>
</dbReference>
<dbReference type="FunFam" id="3.65.10.10:FF:000005">
    <property type="entry name" value="3-phosphoshikimate 1-carboxyvinyltransferase"/>
    <property type="match status" value="1"/>
</dbReference>
<dbReference type="Gene3D" id="3.65.10.10">
    <property type="entry name" value="Enolpyruvate transferase domain"/>
    <property type="match status" value="2"/>
</dbReference>
<dbReference type="HAMAP" id="MF_00210">
    <property type="entry name" value="EPSP_synth"/>
    <property type="match status" value="1"/>
</dbReference>
<dbReference type="InterPro" id="IPR001986">
    <property type="entry name" value="Enolpyruvate_Tfrase_dom"/>
</dbReference>
<dbReference type="InterPro" id="IPR036968">
    <property type="entry name" value="Enolpyruvate_Tfrase_sf"/>
</dbReference>
<dbReference type="InterPro" id="IPR006264">
    <property type="entry name" value="EPSP_synthase"/>
</dbReference>
<dbReference type="InterPro" id="IPR023193">
    <property type="entry name" value="EPSP_synthase_CS"/>
</dbReference>
<dbReference type="InterPro" id="IPR013792">
    <property type="entry name" value="RNA3'P_cycl/enolpyr_Trfase_a/b"/>
</dbReference>
<dbReference type="NCBIfam" id="TIGR01356">
    <property type="entry name" value="aroA"/>
    <property type="match status" value="1"/>
</dbReference>
<dbReference type="PANTHER" id="PTHR21090">
    <property type="entry name" value="AROM/DEHYDROQUINATE SYNTHASE"/>
    <property type="match status" value="1"/>
</dbReference>
<dbReference type="PANTHER" id="PTHR21090:SF5">
    <property type="entry name" value="PENTAFUNCTIONAL AROM POLYPEPTIDE"/>
    <property type="match status" value="1"/>
</dbReference>
<dbReference type="Pfam" id="PF00275">
    <property type="entry name" value="EPSP_synthase"/>
    <property type="match status" value="1"/>
</dbReference>
<dbReference type="PIRSF" id="PIRSF000505">
    <property type="entry name" value="EPSPS"/>
    <property type="match status" value="1"/>
</dbReference>
<dbReference type="SUPFAM" id="SSF55205">
    <property type="entry name" value="EPT/RTPC-like"/>
    <property type="match status" value="1"/>
</dbReference>
<dbReference type="PROSITE" id="PS00104">
    <property type="entry name" value="EPSP_SYNTHASE_1"/>
    <property type="match status" value="1"/>
</dbReference>
<dbReference type="PROSITE" id="PS00885">
    <property type="entry name" value="EPSP_SYNTHASE_2"/>
    <property type="match status" value="1"/>
</dbReference>
<keyword id="KW-0028">Amino-acid biosynthesis</keyword>
<keyword id="KW-0057">Aromatic amino acid biosynthesis</keyword>
<keyword id="KW-0963">Cytoplasm</keyword>
<keyword id="KW-0808">Transferase</keyword>